<gene>
    <name type="primary">sigS</name>
    <name type="ordered locus">SAOUHSC_01897</name>
</gene>
<organism>
    <name type="scientific">Staphylococcus aureus (strain NCTC 8325 / PS 47)</name>
    <dbReference type="NCBI Taxonomy" id="93061"/>
    <lineage>
        <taxon>Bacteria</taxon>
        <taxon>Bacillati</taxon>
        <taxon>Bacillota</taxon>
        <taxon>Bacilli</taxon>
        <taxon>Bacillales</taxon>
        <taxon>Staphylococcaceae</taxon>
        <taxon>Staphylococcus</taxon>
    </lineage>
</organism>
<protein>
    <recommendedName>
        <fullName>RNA polymerase sigma factor SigS</fullName>
    </recommendedName>
</protein>
<keyword id="KW-0238">DNA-binding</keyword>
<keyword id="KW-1185">Reference proteome</keyword>
<keyword id="KW-0731">Sigma factor</keyword>
<keyword id="KW-0804">Transcription</keyword>
<keyword id="KW-0805">Transcription regulation</keyword>
<comment type="function">
    <text evidence="2">Sigma factors are initiation factors that promote the attachment of RNA polymerase to specific initiation sites and are then released. Sigma-S contributes to the protection against external stress, thus playing a role in cellular fitness and survival.</text>
</comment>
<comment type="induction">
    <text evidence="2">Autoregulated.</text>
</comment>
<comment type="disruption phenotype">
    <text evidence="2">Cells lacking this gene display a decrease in viability during heat shock, long term survival and starvation experiments. They also exhibit significantly reduced virulence in a murine model of septic arthritis infection and decreased capacity to colonize host tissues.</text>
</comment>
<comment type="similarity">
    <text evidence="3">Belongs to the sigma-70 factor family.</text>
</comment>
<comment type="sequence caution" evidence="3">
    <conflict type="erroneous initiation">
        <sequence resource="EMBL-CDS" id="AAN32728"/>
    </conflict>
</comment>
<accession>Q2FXF2</accession>
<accession>Q8GQH6</accession>
<proteinExistence type="evidence at protein level"/>
<sequence length="156" mass="19153">MKFNDVYNKHQKIIHYLLKKYNISYNYDEYYQLLLIKMWQLSQIYKPSSKQSLSSFLFTRLNFYLIDLFRQQNQLKDVILCENNSPTLTEQPTYFNEHDLRLQDIFKLLNQRERLWLKLYLEGYKQFEIAEIMSLSLSTIKLIKMSVKRKCQHNFN</sequence>
<evidence type="ECO:0000250" key="1"/>
<evidence type="ECO:0000269" key="2">
    <source>
    </source>
</evidence>
<evidence type="ECO:0000305" key="3"/>
<reference key="1">
    <citation type="submission" date="2001-09" db="EMBL/GenBank/DDBJ databases">
        <title>Identification and characterization of a novel glucosaminidase important for biofilm formation in Staphylococcus aureus.</title>
        <authorList>
            <person name="Cramton S.E."/>
            <person name="Richard C."/>
            <person name="Oberfeld B."/>
            <person name="Pfitzner U."/>
            <person name="Goetz F."/>
        </authorList>
    </citation>
    <scope>NUCLEOTIDE SEQUENCE [GENOMIC DNA]</scope>
</reference>
<reference key="2">
    <citation type="book" date="2006" name="Gram positive pathogens, 2nd edition">
        <title>The Staphylococcus aureus NCTC 8325 genome.</title>
        <editorList>
            <person name="Fischetti V."/>
            <person name="Novick R."/>
            <person name="Ferretti J."/>
            <person name="Portnoy D."/>
            <person name="Rood J."/>
        </editorList>
        <authorList>
            <person name="Gillaspy A.F."/>
            <person name="Worrell V."/>
            <person name="Orvis J."/>
            <person name="Roe B.A."/>
            <person name="Dyer D.W."/>
            <person name="Iandolo J.J."/>
        </authorList>
    </citation>
    <scope>NUCLEOTIDE SEQUENCE [LARGE SCALE GENOMIC DNA]</scope>
    <source>
        <strain>NCTC 8325 / PS 47</strain>
    </source>
</reference>
<reference key="3">
    <citation type="journal article" date="2008" name="PLoS ONE">
        <title>Identification and characterization of sigma(S), a novel component of the Staphylococcus aureus stress and virulence responses.</title>
        <authorList>
            <person name="Shaw L.N."/>
            <person name="Lindholm C."/>
            <person name="Prajsnar T.K."/>
            <person name="Miller H.K."/>
            <person name="Brown M.C."/>
            <person name="Golonka E."/>
            <person name="Stewart G.C."/>
            <person name="Tarkowski A."/>
            <person name="Potempa J."/>
        </authorList>
    </citation>
    <scope>FUNCTION AS A SIGMA FACTOR</scope>
    <scope>INDUCTION</scope>
    <scope>DISRUPTION PHENOTYPE</scope>
</reference>
<name>SIGS_STAA8</name>
<feature type="chain" id="PRO_0000367454" description="RNA polymerase sigma factor SigS">
    <location>
        <begin position="1"/>
        <end position="156"/>
    </location>
</feature>
<feature type="DNA-binding region" description="H-T-H motif" evidence="1">
    <location>
        <begin position="126"/>
        <end position="145"/>
    </location>
</feature>
<feature type="short sequence motif" description="Polymerase core binding">
    <location>
        <begin position="29"/>
        <end position="44"/>
    </location>
</feature>
<feature type="sequence conflict" description="In Ref. 1; AAN32728." evidence="3" ref="1">
    <original>N</original>
    <variation>D</variation>
    <location>
        <position position="22"/>
    </location>
</feature>
<dbReference type="EMBL" id="AF422190">
    <property type="protein sequence ID" value="AAN32728.1"/>
    <property type="status" value="ALT_INIT"/>
    <property type="molecule type" value="Genomic_DNA"/>
</dbReference>
<dbReference type="EMBL" id="CP000253">
    <property type="protein sequence ID" value="ABD30960.1"/>
    <property type="molecule type" value="Genomic_DNA"/>
</dbReference>
<dbReference type="RefSeq" id="WP_000671063.1">
    <property type="nucleotide sequence ID" value="NZ_LS483365.1"/>
</dbReference>
<dbReference type="RefSeq" id="YP_500398.1">
    <property type="nucleotide sequence ID" value="NC_007795.1"/>
</dbReference>
<dbReference type="SMR" id="Q2FXF2"/>
<dbReference type="STRING" id="93061.SAOUHSC_01897"/>
<dbReference type="PaxDb" id="1280-SAXN108_1807"/>
<dbReference type="GeneID" id="3920844"/>
<dbReference type="KEGG" id="sao:SAOUHSC_01897"/>
<dbReference type="PATRIC" id="fig|93061.5.peg.1726"/>
<dbReference type="eggNOG" id="COG1595">
    <property type="taxonomic scope" value="Bacteria"/>
</dbReference>
<dbReference type="HOGENOM" id="CLU_047691_20_2_9"/>
<dbReference type="OrthoDB" id="9783788at2"/>
<dbReference type="PHI-base" id="PHI:6112"/>
<dbReference type="PRO" id="PR:Q2FXF2"/>
<dbReference type="Proteomes" id="UP000008816">
    <property type="component" value="Chromosome"/>
</dbReference>
<dbReference type="GO" id="GO:0003677">
    <property type="term" value="F:DNA binding"/>
    <property type="evidence" value="ECO:0007669"/>
    <property type="project" value="UniProtKB-KW"/>
</dbReference>
<dbReference type="GO" id="GO:0016987">
    <property type="term" value="F:sigma factor activity"/>
    <property type="evidence" value="ECO:0007669"/>
    <property type="project" value="UniProtKB-KW"/>
</dbReference>
<dbReference type="GO" id="GO:0006352">
    <property type="term" value="P:DNA-templated transcription initiation"/>
    <property type="evidence" value="ECO:0007669"/>
    <property type="project" value="InterPro"/>
</dbReference>
<dbReference type="Gene3D" id="1.10.10.10">
    <property type="entry name" value="Winged helix-like DNA-binding domain superfamily/Winged helix DNA-binding domain"/>
    <property type="match status" value="1"/>
</dbReference>
<dbReference type="InterPro" id="IPR014284">
    <property type="entry name" value="RNA_pol_sigma-70_dom"/>
</dbReference>
<dbReference type="InterPro" id="IPR007627">
    <property type="entry name" value="RNA_pol_sigma70_r2"/>
</dbReference>
<dbReference type="InterPro" id="IPR013325">
    <property type="entry name" value="RNA_pol_sigma_r2"/>
</dbReference>
<dbReference type="InterPro" id="IPR016032">
    <property type="entry name" value="Sig_transdc_resp-reg_C-effctor"/>
</dbReference>
<dbReference type="InterPro" id="IPR036388">
    <property type="entry name" value="WH-like_DNA-bd_sf"/>
</dbReference>
<dbReference type="NCBIfam" id="TIGR02937">
    <property type="entry name" value="sigma70-ECF"/>
    <property type="match status" value="1"/>
</dbReference>
<dbReference type="Pfam" id="PF04542">
    <property type="entry name" value="Sigma70_r2"/>
    <property type="match status" value="1"/>
</dbReference>
<dbReference type="SUPFAM" id="SSF46894">
    <property type="entry name" value="C-terminal effector domain of the bipartite response regulators"/>
    <property type="match status" value="1"/>
</dbReference>
<dbReference type="SUPFAM" id="SSF88946">
    <property type="entry name" value="Sigma2 domain of RNA polymerase sigma factors"/>
    <property type="match status" value="1"/>
</dbReference>